<sequence length="529" mass="57001">MNNARPIRRALLSVSDKTGILEFAQALHAQGVELLSTGGTARLLADNGVPVIEVSDYTGHPEIMDGRVKTLHPKVHGGILARRGIDEIVMEQNNIKPIDLVAVNLYPFAATVAAEGCTLADAIENIDIGGPTMVRSTAKNHKDTTIIVNANDYGRVIAEMQANQGSTTLETRFDLAIAAFEHTAAYDGMIANYFGTKVPAHSKDECHEDSKFPRTYNTQLVKKQDLRYGENSHQTAAFYVDTHLDEASVATAVQLQGKALSYNNIADTDSALECVKEFDEPACVIVKHANPCGVAIGENLLEAYNRAFQTDPTSAFGGIIAFNGELDAATASAIVERQFVEVIIAPKVSQAARDVIAAKANVRVLECGQWASKTTSLDYKRVNGGLLLQDRDQGMVGIDDVKVVSKRQPTASEMKDLMFCWKVAKFVKSNAIVYAKNSMTIGVGAGQMSRVYSAKVAGIKAADEGLEVQDSVMASDAFFPFRDGIDAAAEAGISCIIQPGGSIRDEEIIAAADEHGMAMVFTGMRHFRH</sequence>
<feature type="chain" id="PRO_1000076493" description="Bifunctional purine biosynthesis protein PurH">
    <location>
        <begin position="1"/>
        <end position="529"/>
    </location>
</feature>
<feature type="domain" description="MGS-like" evidence="2">
    <location>
        <begin position="1"/>
        <end position="148"/>
    </location>
</feature>
<name>PUR9_SHEHH</name>
<reference key="1">
    <citation type="submission" date="2008-01" db="EMBL/GenBank/DDBJ databases">
        <title>Complete sequence of Shewanella halifaxensis HAW-EB4.</title>
        <authorList>
            <consortium name="US DOE Joint Genome Institute"/>
            <person name="Copeland A."/>
            <person name="Lucas S."/>
            <person name="Lapidus A."/>
            <person name="Glavina del Rio T."/>
            <person name="Dalin E."/>
            <person name="Tice H."/>
            <person name="Bruce D."/>
            <person name="Goodwin L."/>
            <person name="Pitluck S."/>
            <person name="Sims D."/>
            <person name="Brettin T."/>
            <person name="Detter J.C."/>
            <person name="Han C."/>
            <person name="Kuske C.R."/>
            <person name="Schmutz J."/>
            <person name="Larimer F."/>
            <person name="Land M."/>
            <person name="Hauser L."/>
            <person name="Kyrpides N."/>
            <person name="Kim E."/>
            <person name="Zhao J.-S."/>
            <person name="Richardson P."/>
        </authorList>
    </citation>
    <scope>NUCLEOTIDE SEQUENCE [LARGE SCALE GENOMIC DNA]</scope>
    <source>
        <strain>HAW-EB4</strain>
    </source>
</reference>
<comment type="catalytic activity">
    <reaction evidence="1">
        <text>(6R)-10-formyltetrahydrofolate + 5-amino-1-(5-phospho-beta-D-ribosyl)imidazole-4-carboxamide = 5-formamido-1-(5-phospho-D-ribosyl)imidazole-4-carboxamide + (6S)-5,6,7,8-tetrahydrofolate</text>
        <dbReference type="Rhea" id="RHEA:22192"/>
        <dbReference type="ChEBI" id="CHEBI:57453"/>
        <dbReference type="ChEBI" id="CHEBI:58467"/>
        <dbReference type="ChEBI" id="CHEBI:58475"/>
        <dbReference type="ChEBI" id="CHEBI:195366"/>
        <dbReference type="EC" id="2.1.2.3"/>
    </reaction>
</comment>
<comment type="catalytic activity">
    <reaction evidence="1">
        <text>IMP + H2O = 5-formamido-1-(5-phospho-D-ribosyl)imidazole-4-carboxamide</text>
        <dbReference type="Rhea" id="RHEA:18445"/>
        <dbReference type="ChEBI" id="CHEBI:15377"/>
        <dbReference type="ChEBI" id="CHEBI:58053"/>
        <dbReference type="ChEBI" id="CHEBI:58467"/>
        <dbReference type="EC" id="3.5.4.10"/>
    </reaction>
</comment>
<comment type="pathway">
    <text evidence="1">Purine metabolism; IMP biosynthesis via de novo pathway; 5-formamido-1-(5-phospho-D-ribosyl)imidazole-4-carboxamide from 5-amino-1-(5-phospho-D-ribosyl)imidazole-4-carboxamide (10-formyl THF route): step 1/1.</text>
</comment>
<comment type="pathway">
    <text evidence="1">Purine metabolism; IMP biosynthesis via de novo pathway; IMP from 5-formamido-1-(5-phospho-D-ribosyl)imidazole-4-carboxamide: step 1/1.</text>
</comment>
<comment type="domain">
    <text evidence="1">The IMP cyclohydrolase activity resides in the N-terminal region.</text>
</comment>
<comment type="similarity">
    <text evidence="1">Belongs to the PurH family.</text>
</comment>
<organism>
    <name type="scientific">Shewanella halifaxensis (strain HAW-EB4)</name>
    <dbReference type="NCBI Taxonomy" id="458817"/>
    <lineage>
        <taxon>Bacteria</taxon>
        <taxon>Pseudomonadati</taxon>
        <taxon>Pseudomonadota</taxon>
        <taxon>Gammaproteobacteria</taxon>
        <taxon>Alteromonadales</taxon>
        <taxon>Shewanellaceae</taxon>
        <taxon>Shewanella</taxon>
    </lineage>
</organism>
<accession>B0TR91</accession>
<evidence type="ECO:0000255" key="1">
    <source>
        <dbReference type="HAMAP-Rule" id="MF_00139"/>
    </source>
</evidence>
<evidence type="ECO:0000255" key="2">
    <source>
        <dbReference type="PROSITE-ProRule" id="PRU01202"/>
    </source>
</evidence>
<proteinExistence type="inferred from homology"/>
<keyword id="KW-0378">Hydrolase</keyword>
<keyword id="KW-0511">Multifunctional enzyme</keyword>
<keyword id="KW-0658">Purine biosynthesis</keyword>
<keyword id="KW-0808">Transferase</keyword>
<gene>
    <name evidence="1" type="primary">purH</name>
    <name type="ordered locus">Shal_0488</name>
</gene>
<dbReference type="EC" id="2.1.2.3" evidence="1"/>
<dbReference type="EC" id="3.5.4.10" evidence="1"/>
<dbReference type="EMBL" id="CP000931">
    <property type="protein sequence ID" value="ABZ75063.1"/>
    <property type="molecule type" value="Genomic_DNA"/>
</dbReference>
<dbReference type="RefSeq" id="WP_012275617.1">
    <property type="nucleotide sequence ID" value="NC_010334.1"/>
</dbReference>
<dbReference type="SMR" id="B0TR91"/>
<dbReference type="STRING" id="458817.Shal_0488"/>
<dbReference type="KEGG" id="shl:Shal_0488"/>
<dbReference type="eggNOG" id="COG0138">
    <property type="taxonomic scope" value="Bacteria"/>
</dbReference>
<dbReference type="HOGENOM" id="CLU_016316_5_2_6"/>
<dbReference type="OrthoDB" id="9802065at2"/>
<dbReference type="UniPathway" id="UPA00074">
    <property type="reaction ID" value="UER00133"/>
</dbReference>
<dbReference type="UniPathway" id="UPA00074">
    <property type="reaction ID" value="UER00135"/>
</dbReference>
<dbReference type="Proteomes" id="UP000001317">
    <property type="component" value="Chromosome"/>
</dbReference>
<dbReference type="GO" id="GO:0005829">
    <property type="term" value="C:cytosol"/>
    <property type="evidence" value="ECO:0007669"/>
    <property type="project" value="TreeGrafter"/>
</dbReference>
<dbReference type="GO" id="GO:0003937">
    <property type="term" value="F:IMP cyclohydrolase activity"/>
    <property type="evidence" value="ECO:0007669"/>
    <property type="project" value="UniProtKB-UniRule"/>
</dbReference>
<dbReference type="GO" id="GO:0004643">
    <property type="term" value="F:phosphoribosylaminoimidazolecarboxamide formyltransferase activity"/>
    <property type="evidence" value="ECO:0007669"/>
    <property type="project" value="UniProtKB-UniRule"/>
</dbReference>
<dbReference type="GO" id="GO:0006189">
    <property type="term" value="P:'de novo' IMP biosynthetic process"/>
    <property type="evidence" value="ECO:0007669"/>
    <property type="project" value="UniProtKB-UniRule"/>
</dbReference>
<dbReference type="CDD" id="cd01421">
    <property type="entry name" value="IMPCH"/>
    <property type="match status" value="1"/>
</dbReference>
<dbReference type="FunFam" id="3.40.140.20:FF:000001">
    <property type="entry name" value="Bifunctional purine biosynthesis protein PurH"/>
    <property type="match status" value="1"/>
</dbReference>
<dbReference type="FunFam" id="3.40.140.20:FF:000002">
    <property type="entry name" value="Bifunctional purine biosynthesis protein PurH"/>
    <property type="match status" value="1"/>
</dbReference>
<dbReference type="FunFam" id="3.40.50.1380:FF:000001">
    <property type="entry name" value="Bifunctional purine biosynthesis protein PurH"/>
    <property type="match status" value="1"/>
</dbReference>
<dbReference type="Gene3D" id="3.40.140.20">
    <property type="match status" value="2"/>
</dbReference>
<dbReference type="Gene3D" id="3.40.50.1380">
    <property type="entry name" value="Methylglyoxal synthase-like domain"/>
    <property type="match status" value="1"/>
</dbReference>
<dbReference type="HAMAP" id="MF_00139">
    <property type="entry name" value="PurH"/>
    <property type="match status" value="1"/>
</dbReference>
<dbReference type="InterPro" id="IPR024051">
    <property type="entry name" value="AICAR_Tfase_dup_dom_sf"/>
</dbReference>
<dbReference type="InterPro" id="IPR016193">
    <property type="entry name" value="Cytidine_deaminase-like"/>
</dbReference>
<dbReference type="InterPro" id="IPR011607">
    <property type="entry name" value="MGS-like_dom"/>
</dbReference>
<dbReference type="InterPro" id="IPR036914">
    <property type="entry name" value="MGS-like_dom_sf"/>
</dbReference>
<dbReference type="InterPro" id="IPR002695">
    <property type="entry name" value="PurH-like"/>
</dbReference>
<dbReference type="NCBIfam" id="NF002049">
    <property type="entry name" value="PRK00881.1"/>
    <property type="match status" value="1"/>
</dbReference>
<dbReference type="NCBIfam" id="TIGR00355">
    <property type="entry name" value="purH"/>
    <property type="match status" value="1"/>
</dbReference>
<dbReference type="PANTHER" id="PTHR11692:SF0">
    <property type="entry name" value="BIFUNCTIONAL PURINE BIOSYNTHESIS PROTEIN ATIC"/>
    <property type="match status" value="1"/>
</dbReference>
<dbReference type="PANTHER" id="PTHR11692">
    <property type="entry name" value="BIFUNCTIONAL PURINE BIOSYNTHESIS PROTEIN PURH"/>
    <property type="match status" value="1"/>
</dbReference>
<dbReference type="Pfam" id="PF01808">
    <property type="entry name" value="AICARFT_IMPCHas"/>
    <property type="match status" value="1"/>
</dbReference>
<dbReference type="Pfam" id="PF02142">
    <property type="entry name" value="MGS"/>
    <property type="match status" value="1"/>
</dbReference>
<dbReference type="PIRSF" id="PIRSF000414">
    <property type="entry name" value="AICARFT_IMPCHas"/>
    <property type="match status" value="1"/>
</dbReference>
<dbReference type="SMART" id="SM00798">
    <property type="entry name" value="AICARFT_IMPCHas"/>
    <property type="match status" value="1"/>
</dbReference>
<dbReference type="SMART" id="SM00851">
    <property type="entry name" value="MGS"/>
    <property type="match status" value="1"/>
</dbReference>
<dbReference type="SUPFAM" id="SSF53927">
    <property type="entry name" value="Cytidine deaminase-like"/>
    <property type="match status" value="1"/>
</dbReference>
<dbReference type="SUPFAM" id="SSF52335">
    <property type="entry name" value="Methylglyoxal synthase-like"/>
    <property type="match status" value="1"/>
</dbReference>
<dbReference type="PROSITE" id="PS51855">
    <property type="entry name" value="MGS"/>
    <property type="match status" value="1"/>
</dbReference>
<protein>
    <recommendedName>
        <fullName evidence="1">Bifunctional purine biosynthesis protein PurH</fullName>
    </recommendedName>
    <domain>
        <recommendedName>
            <fullName evidence="1">Phosphoribosylaminoimidazolecarboxamide formyltransferase</fullName>
            <ecNumber evidence="1">2.1.2.3</ecNumber>
        </recommendedName>
        <alternativeName>
            <fullName evidence="1">AICAR transformylase</fullName>
        </alternativeName>
    </domain>
    <domain>
        <recommendedName>
            <fullName evidence="1">IMP cyclohydrolase</fullName>
            <ecNumber evidence="1">3.5.4.10</ecNumber>
        </recommendedName>
        <alternativeName>
            <fullName evidence="1">ATIC</fullName>
        </alternativeName>
        <alternativeName>
            <fullName evidence="1">IMP synthase</fullName>
        </alternativeName>
        <alternativeName>
            <fullName evidence="1">Inosinicase</fullName>
        </alternativeName>
    </domain>
</protein>